<name>ACPS_GEOKA</name>
<evidence type="ECO:0000255" key="1">
    <source>
        <dbReference type="HAMAP-Rule" id="MF_00101"/>
    </source>
</evidence>
<accession>Q5L3G7</accession>
<reference key="1">
    <citation type="journal article" date="2004" name="Nucleic Acids Res.">
        <title>Thermoadaptation trait revealed by the genome sequence of thermophilic Geobacillus kaustophilus.</title>
        <authorList>
            <person name="Takami H."/>
            <person name="Takaki Y."/>
            <person name="Chee G.-J."/>
            <person name="Nishi S."/>
            <person name="Shimamura S."/>
            <person name="Suzuki H."/>
            <person name="Matsui S."/>
            <person name="Uchiyama I."/>
        </authorList>
    </citation>
    <scope>NUCLEOTIDE SEQUENCE [LARGE SCALE GENOMIC DNA]</scope>
    <source>
        <strain>HTA426</strain>
    </source>
</reference>
<keyword id="KW-0963">Cytoplasm</keyword>
<keyword id="KW-0275">Fatty acid biosynthesis</keyword>
<keyword id="KW-0276">Fatty acid metabolism</keyword>
<keyword id="KW-0444">Lipid biosynthesis</keyword>
<keyword id="KW-0443">Lipid metabolism</keyword>
<keyword id="KW-0460">Magnesium</keyword>
<keyword id="KW-0479">Metal-binding</keyword>
<keyword id="KW-1185">Reference proteome</keyword>
<keyword id="KW-0808">Transferase</keyword>
<proteinExistence type="inferred from homology"/>
<protein>
    <recommendedName>
        <fullName evidence="1">Holo-[acyl-carrier-protein] synthase</fullName>
        <shortName evidence="1">Holo-ACP synthase</shortName>
        <ecNumber evidence="1">2.7.8.7</ecNumber>
    </recommendedName>
    <alternativeName>
        <fullName evidence="1">4'-phosphopantetheinyl transferase AcpS</fullName>
    </alternativeName>
</protein>
<feature type="chain" id="PRO_0000175650" description="Holo-[acyl-carrier-protein] synthase">
    <location>
        <begin position="1"/>
        <end position="129"/>
    </location>
</feature>
<feature type="binding site" evidence="1">
    <location>
        <position position="8"/>
    </location>
    <ligand>
        <name>Mg(2+)</name>
        <dbReference type="ChEBI" id="CHEBI:18420"/>
    </ligand>
</feature>
<feature type="binding site" evidence="1">
    <location>
        <position position="58"/>
    </location>
    <ligand>
        <name>Mg(2+)</name>
        <dbReference type="ChEBI" id="CHEBI:18420"/>
    </ligand>
</feature>
<sequence>MIVGIGIDIVELERIRSLLERSRKFPERILTPREKAQFGELPPARQAEFLAGRFAAKEAYAKALGTGIGRHLSFQDIEIVSDEHGKPSIAARRDGETVHLSISHSRDYAVAQVVIERLGPMTPADACHG</sequence>
<gene>
    <name evidence="1" type="primary">acpS</name>
    <name type="ordered locus">GK0228</name>
</gene>
<organism>
    <name type="scientific">Geobacillus kaustophilus (strain HTA426)</name>
    <dbReference type="NCBI Taxonomy" id="235909"/>
    <lineage>
        <taxon>Bacteria</taxon>
        <taxon>Bacillati</taxon>
        <taxon>Bacillota</taxon>
        <taxon>Bacilli</taxon>
        <taxon>Bacillales</taxon>
        <taxon>Anoxybacillaceae</taxon>
        <taxon>Geobacillus</taxon>
        <taxon>Geobacillus thermoleovorans group</taxon>
    </lineage>
</organism>
<comment type="function">
    <text evidence="1">Transfers the 4'-phosphopantetheine moiety from coenzyme A to a Ser of acyl-carrier-protein.</text>
</comment>
<comment type="catalytic activity">
    <reaction evidence="1">
        <text>apo-[ACP] + CoA = holo-[ACP] + adenosine 3',5'-bisphosphate + H(+)</text>
        <dbReference type="Rhea" id="RHEA:12068"/>
        <dbReference type="Rhea" id="RHEA-COMP:9685"/>
        <dbReference type="Rhea" id="RHEA-COMP:9690"/>
        <dbReference type="ChEBI" id="CHEBI:15378"/>
        <dbReference type="ChEBI" id="CHEBI:29999"/>
        <dbReference type="ChEBI" id="CHEBI:57287"/>
        <dbReference type="ChEBI" id="CHEBI:58343"/>
        <dbReference type="ChEBI" id="CHEBI:64479"/>
        <dbReference type="EC" id="2.7.8.7"/>
    </reaction>
</comment>
<comment type="cofactor">
    <cofactor evidence="1">
        <name>Mg(2+)</name>
        <dbReference type="ChEBI" id="CHEBI:18420"/>
    </cofactor>
</comment>
<comment type="subcellular location">
    <subcellularLocation>
        <location evidence="1">Cytoplasm</location>
    </subcellularLocation>
</comment>
<comment type="similarity">
    <text evidence="1">Belongs to the P-Pant transferase superfamily. AcpS family.</text>
</comment>
<dbReference type="EC" id="2.7.8.7" evidence="1"/>
<dbReference type="EMBL" id="BA000043">
    <property type="protein sequence ID" value="BAD74513.1"/>
    <property type="molecule type" value="Genomic_DNA"/>
</dbReference>
<dbReference type="RefSeq" id="WP_011229738.1">
    <property type="nucleotide sequence ID" value="NC_006510.1"/>
</dbReference>
<dbReference type="SMR" id="Q5L3G7"/>
<dbReference type="STRING" id="235909.GK0228"/>
<dbReference type="GeneID" id="32062208"/>
<dbReference type="KEGG" id="gka:GK0228"/>
<dbReference type="eggNOG" id="COG0736">
    <property type="taxonomic scope" value="Bacteria"/>
</dbReference>
<dbReference type="HOGENOM" id="CLU_089696_1_2_9"/>
<dbReference type="Proteomes" id="UP000001172">
    <property type="component" value="Chromosome"/>
</dbReference>
<dbReference type="GO" id="GO:0005829">
    <property type="term" value="C:cytosol"/>
    <property type="evidence" value="ECO:0007669"/>
    <property type="project" value="TreeGrafter"/>
</dbReference>
<dbReference type="GO" id="GO:0008897">
    <property type="term" value="F:holo-[acyl-carrier-protein] synthase activity"/>
    <property type="evidence" value="ECO:0007669"/>
    <property type="project" value="UniProtKB-UniRule"/>
</dbReference>
<dbReference type="GO" id="GO:0000287">
    <property type="term" value="F:magnesium ion binding"/>
    <property type="evidence" value="ECO:0007669"/>
    <property type="project" value="UniProtKB-UniRule"/>
</dbReference>
<dbReference type="GO" id="GO:0006633">
    <property type="term" value="P:fatty acid biosynthetic process"/>
    <property type="evidence" value="ECO:0007669"/>
    <property type="project" value="UniProtKB-UniRule"/>
</dbReference>
<dbReference type="GO" id="GO:0019878">
    <property type="term" value="P:lysine biosynthetic process via aminoadipic acid"/>
    <property type="evidence" value="ECO:0007669"/>
    <property type="project" value="TreeGrafter"/>
</dbReference>
<dbReference type="Gene3D" id="3.90.470.20">
    <property type="entry name" value="4'-phosphopantetheinyl transferase domain"/>
    <property type="match status" value="1"/>
</dbReference>
<dbReference type="HAMAP" id="MF_00101">
    <property type="entry name" value="AcpS"/>
    <property type="match status" value="1"/>
</dbReference>
<dbReference type="InterPro" id="IPR008278">
    <property type="entry name" value="4-PPantetheinyl_Trfase_dom"/>
</dbReference>
<dbReference type="InterPro" id="IPR037143">
    <property type="entry name" value="4-PPantetheinyl_Trfase_dom_sf"/>
</dbReference>
<dbReference type="InterPro" id="IPR002582">
    <property type="entry name" value="ACPS"/>
</dbReference>
<dbReference type="InterPro" id="IPR050559">
    <property type="entry name" value="P-Pant_transferase_sf"/>
</dbReference>
<dbReference type="InterPro" id="IPR004568">
    <property type="entry name" value="Ppantetheine-prot_Trfase_dom"/>
</dbReference>
<dbReference type="NCBIfam" id="TIGR00516">
    <property type="entry name" value="acpS"/>
    <property type="match status" value="1"/>
</dbReference>
<dbReference type="NCBIfam" id="TIGR00556">
    <property type="entry name" value="pantethn_trn"/>
    <property type="match status" value="1"/>
</dbReference>
<dbReference type="PANTHER" id="PTHR12215:SF10">
    <property type="entry name" value="L-AMINOADIPATE-SEMIALDEHYDE DEHYDROGENASE-PHOSPHOPANTETHEINYL TRANSFERASE"/>
    <property type="match status" value="1"/>
</dbReference>
<dbReference type="PANTHER" id="PTHR12215">
    <property type="entry name" value="PHOSPHOPANTETHEINE TRANSFERASE"/>
    <property type="match status" value="1"/>
</dbReference>
<dbReference type="Pfam" id="PF01648">
    <property type="entry name" value="ACPS"/>
    <property type="match status" value="1"/>
</dbReference>
<dbReference type="SUPFAM" id="SSF56214">
    <property type="entry name" value="4'-phosphopantetheinyl transferase"/>
    <property type="match status" value="1"/>
</dbReference>